<evidence type="ECO:0000255" key="1">
    <source>
        <dbReference type="HAMAP-Rule" id="MF_01525"/>
    </source>
</evidence>
<evidence type="ECO:0000256" key="2">
    <source>
        <dbReference type="SAM" id="MobiDB-lite"/>
    </source>
</evidence>
<sequence>MSYYAFEGLIPVVHPTAFVHPSAVLIGDVIVGAGVYIGPLASLRGDYGRLIVQAGANIQDGCIMHGYCDTDTIVGENGHIGHGAILHGCVIGRDALVGMNSVIMDGAVIGEESIVAAMSFVKAGFRGEKRQLLMGTPARAVRSVSDDELHWKRLNTKEYQDLVGRCHASLHETQPLRQMEENRPRLQGTTDVMPKR</sequence>
<gene>
    <name evidence="1" type="primary">caiE</name>
    <name type="ordered locus">ECED1_0034</name>
</gene>
<feature type="chain" id="PRO_1000185133" description="Carnitine operon protein CaiE">
    <location>
        <begin position="1"/>
        <end position="196"/>
    </location>
</feature>
<feature type="region of interest" description="Disordered" evidence="2">
    <location>
        <begin position="177"/>
        <end position="196"/>
    </location>
</feature>
<reference key="1">
    <citation type="journal article" date="2009" name="PLoS Genet.">
        <title>Organised genome dynamics in the Escherichia coli species results in highly diverse adaptive paths.</title>
        <authorList>
            <person name="Touchon M."/>
            <person name="Hoede C."/>
            <person name="Tenaillon O."/>
            <person name="Barbe V."/>
            <person name="Baeriswyl S."/>
            <person name="Bidet P."/>
            <person name="Bingen E."/>
            <person name="Bonacorsi S."/>
            <person name="Bouchier C."/>
            <person name="Bouvet O."/>
            <person name="Calteau A."/>
            <person name="Chiapello H."/>
            <person name="Clermont O."/>
            <person name="Cruveiller S."/>
            <person name="Danchin A."/>
            <person name="Diard M."/>
            <person name="Dossat C."/>
            <person name="Karoui M.E."/>
            <person name="Frapy E."/>
            <person name="Garry L."/>
            <person name="Ghigo J.M."/>
            <person name="Gilles A.M."/>
            <person name="Johnson J."/>
            <person name="Le Bouguenec C."/>
            <person name="Lescat M."/>
            <person name="Mangenot S."/>
            <person name="Martinez-Jehanne V."/>
            <person name="Matic I."/>
            <person name="Nassif X."/>
            <person name="Oztas S."/>
            <person name="Petit M.A."/>
            <person name="Pichon C."/>
            <person name="Rouy Z."/>
            <person name="Ruf C.S."/>
            <person name="Schneider D."/>
            <person name="Tourret J."/>
            <person name="Vacherie B."/>
            <person name="Vallenet D."/>
            <person name="Medigue C."/>
            <person name="Rocha E.P.C."/>
            <person name="Denamur E."/>
        </authorList>
    </citation>
    <scope>NUCLEOTIDE SEQUENCE [LARGE SCALE GENOMIC DNA]</scope>
    <source>
        <strain>ED1a</strain>
    </source>
</reference>
<keyword id="KW-0677">Repeat</keyword>
<keyword id="KW-0808">Transferase</keyword>
<accession>B7MNP2</accession>
<proteinExistence type="inferred from homology"/>
<organism>
    <name type="scientific">Escherichia coli O81 (strain ED1a)</name>
    <dbReference type="NCBI Taxonomy" id="585397"/>
    <lineage>
        <taxon>Bacteria</taxon>
        <taxon>Pseudomonadati</taxon>
        <taxon>Pseudomonadota</taxon>
        <taxon>Gammaproteobacteria</taxon>
        <taxon>Enterobacterales</taxon>
        <taxon>Enterobacteriaceae</taxon>
        <taxon>Escherichia</taxon>
    </lineage>
</organism>
<name>CAIE_ECO81</name>
<comment type="function">
    <text evidence="1">Overproduction of CaiE stimulates the activity of CaiB and CaiD.</text>
</comment>
<comment type="pathway">
    <text evidence="1">Amine and polyamine metabolism; carnitine metabolism.</text>
</comment>
<comment type="similarity">
    <text evidence="1">Belongs to the transferase hexapeptide repeat family.</text>
</comment>
<dbReference type="EMBL" id="CU928162">
    <property type="protein sequence ID" value="CAR06257.1"/>
    <property type="molecule type" value="Genomic_DNA"/>
</dbReference>
<dbReference type="RefSeq" id="WP_000122881.1">
    <property type="nucleotide sequence ID" value="NC_011745.1"/>
</dbReference>
<dbReference type="SMR" id="B7MNP2"/>
<dbReference type="KEGG" id="ecq:ECED1_0034"/>
<dbReference type="HOGENOM" id="CLU_064827_4_2_6"/>
<dbReference type="UniPathway" id="UPA00117"/>
<dbReference type="Proteomes" id="UP000000748">
    <property type="component" value="Chromosome"/>
</dbReference>
<dbReference type="GO" id="GO:0016740">
    <property type="term" value="F:transferase activity"/>
    <property type="evidence" value="ECO:0007669"/>
    <property type="project" value="UniProtKB-KW"/>
</dbReference>
<dbReference type="GO" id="GO:0009437">
    <property type="term" value="P:carnitine metabolic process"/>
    <property type="evidence" value="ECO:0007669"/>
    <property type="project" value="UniProtKB-UniRule"/>
</dbReference>
<dbReference type="CDD" id="cd04745">
    <property type="entry name" value="LbH_paaY_like"/>
    <property type="match status" value="1"/>
</dbReference>
<dbReference type="FunFam" id="2.160.10.10:FF:000012">
    <property type="entry name" value="Carnitine operon protein CaiE"/>
    <property type="match status" value="1"/>
</dbReference>
<dbReference type="Gene3D" id="2.160.10.10">
    <property type="entry name" value="Hexapeptide repeat proteins"/>
    <property type="match status" value="1"/>
</dbReference>
<dbReference type="HAMAP" id="MF_01525">
    <property type="entry name" value="CaiE"/>
    <property type="match status" value="1"/>
</dbReference>
<dbReference type="InterPro" id="IPR023446">
    <property type="entry name" value="CaiE"/>
</dbReference>
<dbReference type="InterPro" id="IPR001451">
    <property type="entry name" value="Hexapep"/>
</dbReference>
<dbReference type="InterPro" id="IPR050484">
    <property type="entry name" value="Transf_Hexapept/Carb_Anhydrase"/>
</dbReference>
<dbReference type="InterPro" id="IPR011004">
    <property type="entry name" value="Trimer_LpxA-like_sf"/>
</dbReference>
<dbReference type="NCBIfam" id="NF010150">
    <property type="entry name" value="PRK13627.1"/>
    <property type="match status" value="1"/>
</dbReference>
<dbReference type="PANTHER" id="PTHR13061">
    <property type="entry name" value="DYNACTIN SUBUNIT P25"/>
    <property type="match status" value="1"/>
</dbReference>
<dbReference type="PANTHER" id="PTHR13061:SF29">
    <property type="entry name" value="GAMMA CARBONIC ANHYDRASE-LIKE 1, MITOCHONDRIAL-RELATED"/>
    <property type="match status" value="1"/>
</dbReference>
<dbReference type="Pfam" id="PF00132">
    <property type="entry name" value="Hexapep"/>
    <property type="match status" value="1"/>
</dbReference>
<dbReference type="SUPFAM" id="SSF51161">
    <property type="entry name" value="Trimeric LpxA-like enzymes"/>
    <property type="match status" value="1"/>
</dbReference>
<protein>
    <recommendedName>
        <fullName evidence="1">Carnitine operon protein CaiE</fullName>
    </recommendedName>
</protein>